<reference key="1">
    <citation type="journal article" date="1996" name="Nucleic Acids Res.">
        <title>Complete sequence analysis of the genome of the bacterium Mycoplasma pneumoniae.</title>
        <authorList>
            <person name="Himmelreich R."/>
            <person name="Hilbert H."/>
            <person name="Plagens H."/>
            <person name="Pirkl E."/>
            <person name="Li B.-C."/>
            <person name="Herrmann R."/>
        </authorList>
    </citation>
    <scope>NUCLEOTIDE SEQUENCE [LARGE SCALE GENOMIC DNA]</scope>
    <source>
        <strain>ATCC 29342 / M129 / Subtype 1</strain>
    </source>
</reference>
<accession>P75596</accession>
<keyword id="KW-1003">Cell membrane</keyword>
<keyword id="KW-0472">Membrane</keyword>
<keyword id="KW-1185">Reference proteome</keyword>
<keyword id="KW-0812">Transmembrane</keyword>
<keyword id="KW-1133">Transmembrane helix</keyword>
<gene>
    <name type="ordered locus">MPN_096</name>
    <name type="ORF">MP058</name>
    <name type="ORF">R02_orf264</name>
</gene>
<sequence length="264" mass="28961">MLLGLGIVVLIYSLIALSVSLTTPNGAFSGLGDWLKHKKLGWFFGVLNLLIALGVAGIINGFVMWTGKLTQSLIKSGELWVPDKCKLCLNKPKPVVGLIHAGILMVLTTVALSSLGGLLYLPKVNASYDGKGFKSMGCLLEFADLIATWTSVGIFWFLGLVLLGGLLQIKKPKRWYFRTTGWLAVVVIGLTTLVVMVQPFVDLGIAVFNRSYERIVANTILIAILVIIVLVMFFPTEPIKLRLWRKRIQAMEACGEDCDACVEY</sequence>
<protein>
    <recommendedName>
        <fullName>Uncharacterized protein MPN_096</fullName>
    </recommendedName>
</protein>
<name>Y096_MYCPN</name>
<evidence type="ECO:0000255" key="1"/>
<evidence type="ECO:0000305" key="2"/>
<comment type="subcellular location">
    <subcellularLocation>
        <location evidence="2">Cell membrane</location>
        <topology evidence="2">Multi-pass membrane protein</topology>
    </subcellularLocation>
</comment>
<comment type="similarity">
    <text evidence="2">To M.pneumoniae MPN_308 C-terminal region.</text>
</comment>
<dbReference type="EMBL" id="U00089">
    <property type="protein sequence ID" value="AAB95706.1"/>
    <property type="molecule type" value="Genomic_DNA"/>
</dbReference>
<dbReference type="PIR" id="S73384">
    <property type="entry name" value="S73384"/>
</dbReference>
<dbReference type="RefSeq" id="NP_109784.1">
    <property type="nucleotide sequence ID" value="NC_000912.1"/>
</dbReference>
<dbReference type="RefSeq" id="WP_010874453.1">
    <property type="nucleotide sequence ID" value="NC_000912.1"/>
</dbReference>
<dbReference type="STRING" id="272634.MPN_096"/>
<dbReference type="EnsemblBacteria" id="AAB95706">
    <property type="protein sequence ID" value="AAB95706"/>
    <property type="gene ID" value="MPN_096"/>
</dbReference>
<dbReference type="KEGG" id="mpn:MPN_096"/>
<dbReference type="PATRIC" id="fig|272634.6.peg.97"/>
<dbReference type="HOGENOM" id="CLU_1053027_0_0_14"/>
<dbReference type="BioCyc" id="MPNE272634:G1GJ3-160-MONOMER"/>
<dbReference type="Proteomes" id="UP000000808">
    <property type="component" value="Chromosome"/>
</dbReference>
<dbReference type="GO" id="GO:0005886">
    <property type="term" value="C:plasma membrane"/>
    <property type="evidence" value="ECO:0007669"/>
    <property type="project" value="UniProtKB-SubCell"/>
</dbReference>
<dbReference type="GO" id="GO:0022857">
    <property type="term" value="F:transmembrane transporter activity"/>
    <property type="evidence" value="ECO:0007669"/>
    <property type="project" value="InterPro"/>
</dbReference>
<dbReference type="Gene3D" id="1.20.1740.10">
    <property type="entry name" value="Amino acid/polyamine transporter I"/>
    <property type="match status" value="1"/>
</dbReference>
<dbReference type="InterPro" id="IPR002293">
    <property type="entry name" value="AA/rel_permease1"/>
</dbReference>
<dbReference type="Pfam" id="PF13520">
    <property type="entry name" value="AA_permease_2"/>
    <property type="match status" value="1"/>
</dbReference>
<organism>
    <name type="scientific">Mycoplasma pneumoniae (strain ATCC 29342 / M129 / Subtype 1)</name>
    <name type="common">Mycoplasmoides pneumoniae</name>
    <dbReference type="NCBI Taxonomy" id="272634"/>
    <lineage>
        <taxon>Bacteria</taxon>
        <taxon>Bacillati</taxon>
        <taxon>Mycoplasmatota</taxon>
        <taxon>Mycoplasmoidales</taxon>
        <taxon>Mycoplasmoidaceae</taxon>
        <taxon>Mycoplasmoides</taxon>
    </lineage>
</organism>
<feature type="chain" id="PRO_0000210643" description="Uncharacterized protein MPN_096">
    <location>
        <begin position="1"/>
        <end position="264"/>
    </location>
</feature>
<feature type="transmembrane region" description="Helical" evidence="1">
    <location>
        <begin position="1"/>
        <end position="21"/>
    </location>
</feature>
<feature type="transmembrane region" description="Helical" evidence="1">
    <location>
        <begin position="43"/>
        <end position="63"/>
    </location>
</feature>
<feature type="transmembrane region" description="Helical" evidence="1">
    <location>
        <begin position="95"/>
        <end position="115"/>
    </location>
</feature>
<feature type="transmembrane region" description="Helical" evidence="1">
    <location>
        <begin position="146"/>
        <end position="166"/>
    </location>
</feature>
<feature type="transmembrane region" description="Helical" evidence="1">
    <location>
        <begin position="181"/>
        <end position="201"/>
    </location>
</feature>
<feature type="transmembrane region" description="Helical" evidence="1">
    <location>
        <begin position="215"/>
        <end position="235"/>
    </location>
</feature>
<proteinExistence type="predicted"/>